<evidence type="ECO:0000255" key="1">
    <source>
        <dbReference type="HAMAP-Rule" id="MF_01320"/>
    </source>
</evidence>
<evidence type="ECO:0000256" key="2">
    <source>
        <dbReference type="SAM" id="MobiDB-lite"/>
    </source>
</evidence>
<evidence type="ECO:0000305" key="3"/>
<dbReference type="EMBL" id="CP001098">
    <property type="protein sequence ID" value="ACL68881.1"/>
    <property type="molecule type" value="Genomic_DNA"/>
</dbReference>
<dbReference type="RefSeq" id="WP_012635079.1">
    <property type="nucleotide sequence ID" value="NC_011899.1"/>
</dbReference>
<dbReference type="SMR" id="B8D0C7"/>
<dbReference type="STRING" id="373903.Hore_01200"/>
<dbReference type="KEGG" id="hor:Hore_01200"/>
<dbReference type="eggNOG" id="COG0090">
    <property type="taxonomic scope" value="Bacteria"/>
</dbReference>
<dbReference type="HOGENOM" id="CLU_036235_2_1_9"/>
<dbReference type="OrthoDB" id="9778722at2"/>
<dbReference type="Proteomes" id="UP000000719">
    <property type="component" value="Chromosome"/>
</dbReference>
<dbReference type="GO" id="GO:0015934">
    <property type="term" value="C:large ribosomal subunit"/>
    <property type="evidence" value="ECO:0007669"/>
    <property type="project" value="InterPro"/>
</dbReference>
<dbReference type="GO" id="GO:0019843">
    <property type="term" value="F:rRNA binding"/>
    <property type="evidence" value="ECO:0007669"/>
    <property type="project" value="UniProtKB-UniRule"/>
</dbReference>
<dbReference type="GO" id="GO:0003735">
    <property type="term" value="F:structural constituent of ribosome"/>
    <property type="evidence" value="ECO:0007669"/>
    <property type="project" value="InterPro"/>
</dbReference>
<dbReference type="GO" id="GO:0016740">
    <property type="term" value="F:transferase activity"/>
    <property type="evidence" value="ECO:0007669"/>
    <property type="project" value="InterPro"/>
</dbReference>
<dbReference type="GO" id="GO:0002181">
    <property type="term" value="P:cytoplasmic translation"/>
    <property type="evidence" value="ECO:0007669"/>
    <property type="project" value="TreeGrafter"/>
</dbReference>
<dbReference type="FunFam" id="2.30.30.30:FF:000001">
    <property type="entry name" value="50S ribosomal protein L2"/>
    <property type="match status" value="1"/>
</dbReference>
<dbReference type="FunFam" id="2.40.50.140:FF:000003">
    <property type="entry name" value="50S ribosomal protein L2"/>
    <property type="match status" value="1"/>
</dbReference>
<dbReference type="FunFam" id="4.10.950.10:FF:000001">
    <property type="entry name" value="50S ribosomal protein L2"/>
    <property type="match status" value="1"/>
</dbReference>
<dbReference type="Gene3D" id="2.30.30.30">
    <property type="match status" value="1"/>
</dbReference>
<dbReference type="Gene3D" id="2.40.50.140">
    <property type="entry name" value="Nucleic acid-binding proteins"/>
    <property type="match status" value="1"/>
</dbReference>
<dbReference type="Gene3D" id="4.10.950.10">
    <property type="entry name" value="Ribosomal protein L2, domain 3"/>
    <property type="match status" value="1"/>
</dbReference>
<dbReference type="HAMAP" id="MF_01320_B">
    <property type="entry name" value="Ribosomal_uL2_B"/>
    <property type="match status" value="1"/>
</dbReference>
<dbReference type="InterPro" id="IPR012340">
    <property type="entry name" value="NA-bd_OB-fold"/>
</dbReference>
<dbReference type="InterPro" id="IPR014722">
    <property type="entry name" value="Rib_uL2_dom2"/>
</dbReference>
<dbReference type="InterPro" id="IPR002171">
    <property type="entry name" value="Ribosomal_uL2"/>
</dbReference>
<dbReference type="InterPro" id="IPR005880">
    <property type="entry name" value="Ribosomal_uL2_bac/org-type"/>
</dbReference>
<dbReference type="InterPro" id="IPR022669">
    <property type="entry name" value="Ribosomal_uL2_C"/>
</dbReference>
<dbReference type="InterPro" id="IPR022671">
    <property type="entry name" value="Ribosomal_uL2_CS"/>
</dbReference>
<dbReference type="InterPro" id="IPR014726">
    <property type="entry name" value="Ribosomal_uL2_dom3"/>
</dbReference>
<dbReference type="InterPro" id="IPR022666">
    <property type="entry name" value="Ribosomal_uL2_RNA-bd_dom"/>
</dbReference>
<dbReference type="InterPro" id="IPR008991">
    <property type="entry name" value="Translation_prot_SH3-like_sf"/>
</dbReference>
<dbReference type="NCBIfam" id="TIGR01171">
    <property type="entry name" value="rplB_bact"/>
    <property type="match status" value="1"/>
</dbReference>
<dbReference type="PANTHER" id="PTHR13691:SF5">
    <property type="entry name" value="LARGE RIBOSOMAL SUBUNIT PROTEIN UL2M"/>
    <property type="match status" value="1"/>
</dbReference>
<dbReference type="PANTHER" id="PTHR13691">
    <property type="entry name" value="RIBOSOMAL PROTEIN L2"/>
    <property type="match status" value="1"/>
</dbReference>
<dbReference type="Pfam" id="PF00181">
    <property type="entry name" value="Ribosomal_L2"/>
    <property type="match status" value="1"/>
</dbReference>
<dbReference type="Pfam" id="PF03947">
    <property type="entry name" value="Ribosomal_L2_C"/>
    <property type="match status" value="1"/>
</dbReference>
<dbReference type="PIRSF" id="PIRSF002158">
    <property type="entry name" value="Ribosomal_L2"/>
    <property type="match status" value="1"/>
</dbReference>
<dbReference type="SMART" id="SM01383">
    <property type="entry name" value="Ribosomal_L2"/>
    <property type="match status" value="1"/>
</dbReference>
<dbReference type="SMART" id="SM01382">
    <property type="entry name" value="Ribosomal_L2_C"/>
    <property type="match status" value="1"/>
</dbReference>
<dbReference type="SUPFAM" id="SSF50249">
    <property type="entry name" value="Nucleic acid-binding proteins"/>
    <property type="match status" value="1"/>
</dbReference>
<dbReference type="SUPFAM" id="SSF50104">
    <property type="entry name" value="Translation proteins SH3-like domain"/>
    <property type="match status" value="1"/>
</dbReference>
<dbReference type="PROSITE" id="PS00467">
    <property type="entry name" value="RIBOSOMAL_L2"/>
    <property type="match status" value="1"/>
</dbReference>
<sequence length="277" mass="30827">MAIKKFKPTTPSRRFMTVSAFDEITRREPEKSLLAPLKKTGGRNSYGRVTVRHRGGGHKRRYRIIDFKRDKDGVPARVASIEYDPNRSARIALLHYVDGEKRYILAPNKLQVGDTVKSGEDAEIKPGNALKLKNIPVGTIIHNIELKPGKGGQLARAAGTMAQILAKEGKYAHIKLPSGEVRLISLECKATIGQVGNIDHENISIGKAGRKRWLGKRPHVRGVAMNPVDHPHGGGEGRTSTGRHPVTPWGKRTLGKKTRKRKASDKYIIRSRRARKR</sequence>
<reference key="1">
    <citation type="journal article" date="2009" name="PLoS ONE">
        <title>Genome analysis of the anaerobic thermohalophilic bacterium Halothermothrix orenii.</title>
        <authorList>
            <person name="Mavromatis K."/>
            <person name="Ivanova N."/>
            <person name="Anderson I."/>
            <person name="Lykidis A."/>
            <person name="Hooper S.D."/>
            <person name="Sun H."/>
            <person name="Kunin V."/>
            <person name="Lapidus A."/>
            <person name="Hugenholtz P."/>
            <person name="Patel B."/>
            <person name="Kyrpides N.C."/>
        </authorList>
    </citation>
    <scope>NUCLEOTIDE SEQUENCE [LARGE SCALE GENOMIC DNA]</scope>
    <source>
        <strain>H 168 / OCM 544 / DSM 9562</strain>
    </source>
</reference>
<comment type="function">
    <text evidence="1">One of the primary rRNA binding proteins. Required for association of the 30S and 50S subunits to form the 70S ribosome, for tRNA binding and peptide bond formation. It has been suggested to have peptidyltransferase activity; this is somewhat controversial. Makes several contacts with the 16S rRNA in the 70S ribosome.</text>
</comment>
<comment type="subunit">
    <text evidence="1">Part of the 50S ribosomal subunit. Forms a bridge to the 30S subunit in the 70S ribosome.</text>
</comment>
<comment type="similarity">
    <text evidence="1">Belongs to the universal ribosomal protein uL2 family.</text>
</comment>
<name>RL2_HALOH</name>
<organism>
    <name type="scientific">Halothermothrix orenii (strain H 168 / OCM 544 / DSM 9562)</name>
    <dbReference type="NCBI Taxonomy" id="373903"/>
    <lineage>
        <taxon>Bacteria</taxon>
        <taxon>Bacillati</taxon>
        <taxon>Bacillota</taxon>
        <taxon>Clostridia</taxon>
        <taxon>Halanaerobiales</taxon>
        <taxon>Halothermotrichaceae</taxon>
        <taxon>Halothermothrix</taxon>
    </lineage>
</organism>
<proteinExistence type="inferred from homology"/>
<keyword id="KW-1185">Reference proteome</keyword>
<keyword id="KW-0687">Ribonucleoprotein</keyword>
<keyword id="KW-0689">Ribosomal protein</keyword>
<keyword id="KW-0694">RNA-binding</keyword>
<keyword id="KW-0699">rRNA-binding</keyword>
<accession>B8D0C7</accession>
<feature type="chain" id="PRO_1000165753" description="Large ribosomal subunit protein uL2">
    <location>
        <begin position="1"/>
        <end position="277"/>
    </location>
</feature>
<feature type="region of interest" description="Disordered" evidence="2">
    <location>
        <begin position="223"/>
        <end position="277"/>
    </location>
</feature>
<feature type="compositionally biased region" description="Basic residues" evidence="2">
    <location>
        <begin position="253"/>
        <end position="277"/>
    </location>
</feature>
<protein>
    <recommendedName>
        <fullName evidence="1">Large ribosomal subunit protein uL2</fullName>
    </recommendedName>
    <alternativeName>
        <fullName evidence="3">50S ribosomal protein L2</fullName>
    </alternativeName>
</protein>
<gene>
    <name evidence="1" type="primary">rplB</name>
    <name type="ordered locus">Hore_01200</name>
</gene>